<name>NU3C_PICP2</name>
<evidence type="ECO:0000255" key="1">
    <source>
        <dbReference type="HAMAP-Rule" id="MF_01394"/>
    </source>
</evidence>
<reference key="1">
    <citation type="submission" date="2001-05" db="EMBL/GenBank/DDBJ databases">
        <title>An analysis of forty genes encoding electron transport proteins from Synechococcus sp. PCC 7002: a comparative study of electron transport Proteins from cyanobacteria and chloroplasts.</title>
        <authorList>
            <person name="Nomura C.T."/>
            <person name="Persson S."/>
            <person name="Zhao J."/>
            <person name="Bryant D.A."/>
        </authorList>
    </citation>
    <scope>NUCLEOTIDE SEQUENCE [GENOMIC DNA]</scope>
</reference>
<reference key="2">
    <citation type="submission" date="2008-02" db="EMBL/GenBank/DDBJ databases">
        <title>Complete sequence of Synechococcus sp. PCC 7002.</title>
        <authorList>
            <person name="Li T."/>
            <person name="Zhao J."/>
            <person name="Zhao C."/>
            <person name="Liu Z."/>
            <person name="Zhao F."/>
            <person name="Marquardt J."/>
            <person name="Nomura C.T."/>
            <person name="Persson S."/>
            <person name="Detter J.C."/>
            <person name="Richardson P.M."/>
            <person name="Lanz C."/>
            <person name="Schuster S.C."/>
            <person name="Wang J."/>
            <person name="Li S."/>
            <person name="Huang X."/>
            <person name="Cai T."/>
            <person name="Yu Z."/>
            <person name="Luo J."/>
            <person name="Zhao J."/>
            <person name="Bryant D.A."/>
        </authorList>
    </citation>
    <scope>NUCLEOTIDE SEQUENCE [LARGE SCALE GENOMIC DNA]</scope>
    <source>
        <strain>ATCC 27264 / PCC 7002 / PR-6</strain>
    </source>
</reference>
<feature type="chain" id="PRO_0000362788" description="NAD(P)H-quinone oxidoreductase subunit 3">
    <location>
        <begin position="1"/>
        <end position="120"/>
    </location>
</feature>
<feature type="transmembrane region" description="Helical" evidence="1">
    <location>
        <begin position="2"/>
        <end position="22"/>
    </location>
</feature>
<feature type="transmembrane region" description="Helical" evidence="1">
    <location>
        <begin position="64"/>
        <end position="84"/>
    </location>
</feature>
<feature type="transmembrane region" description="Helical" evidence="1">
    <location>
        <begin position="89"/>
        <end position="109"/>
    </location>
</feature>
<comment type="function">
    <text evidence="1">NDH-1 shuttles electrons from an unknown electron donor, via FMN and iron-sulfur (Fe-S) centers, to quinones in the respiratory and/or the photosynthetic chain. The immediate electron acceptor for the enzyme in this species is believed to be plastoquinone. Couples the redox reaction to proton translocation, and thus conserves the redox energy in a proton gradient. Cyanobacterial NDH-1 also plays a role in inorganic carbon-concentration.</text>
</comment>
<comment type="catalytic activity">
    <reaction evidence="1">
        <text>a plastoquinone + NADH + (n+1) H(+)(in) = a plastoquinol + NAD(+) + n H(+)(out)</text>
        <dbReference type="Rhea" id="RHEA:42608"/>
        <dbReference type="Rhea" id="RHEA-COMP:9561"/>
        <dbReference type="Rhea" id="RHEA-COMP:9562"/>
        <dbReference type="ChEBI" id="CHEBI:15378"/>
        <dbReference type="ChEBI" id="CHEBI:17757"/>
        <dbReference type="ChEBI" id="CHEBI:57540"/>
        <dbReference type="ChEBI" id="CHEBI:57945"/>
        <dbReference type="ChEBI" id="CHEBI:62192"/>
    </reaction>
</comment>
<comment type="catalytic activity">
    <reaction evidence="1">
        <text>a plastoquinone + NADPH + (n+1) H(+)(in) = a plastoquinol + NADP(+) + n H(+)(out)</text>
        <dbReference type="Rhea" id="RHEA:42612"/>
        <dbReference type="Rhea" id="RHEA-COMP:9561"/>
        <dbReference type="Rhea" id="RHEA-COMP:9562"/>
        <dbReference type="ChEBI" id="CHEBI:15378"/>
        <dbReference type="ChEBI" id="CHEBI:17757"/>
        <dbReference type="ChEBI" id="CHEBI:57783"/>
        <dbReference type="ChEBI" id="CHEBI:58349"/>
        <dbReference type="ChEBI" id="CHEBI:62192"/>
    </reaction>
</comment>
<comment type="subunit">
    <text evidence="1">NDH-1 can be composed of about 15 different subunits; different subcomplexes with different compositions have been identified which probably have different functions.</text>
</comment>
<comment type="subcellular location">
    <subcellularLocation>
        <location evidence="1">Cellular thylakoid membrane</location>
        <topology evidence="1">Multi-pass membrane protein</topology>
    </subcellularLocation>
</comment>
<comment type="similarity">
    <text evidence="1">Belongs to the complex I subunit 3 family.</text>
</comment>
<gene>
    <name evidence="1" type="primary">ndhC</name>
    <name type="ordered locus">SYNPCC7002_A2748</name>
</gene>
<sequence>MFVLSGYEYFLGFLIVSSLVPILALTASKLLRPKGGGPERKTTYESGMEPIGGAWIQFNIRYYMFALVFVVFDVETVFLYPWAVAFNQLGLLAFVEALIFIAILVIALVYAWRKGALEWS</sequence>
<organism>
    <name type="scientific">Picosynechococcus sp. (strain ATCC 27264 / PCC 7002 / PR-6)</name>
    <name type="common">Agmenellum quadruplicatum</name>
    <dbReference type="NCBI Taxonomy" id="32049"/>
    <lineage>
        <taxon>Bacteria</taxon>
        <taxon>Bacillati</taxon>
        <taxon>Cyanobacteriota</taxon>
        <taxon>Cyanophyceae</taxon>
        <taxon>Oscillatoriophycideae</taxon>
        <taxon>Chroococcales</taxon>
        <taxon>Geminocystaceae</taxon>
        <taxon>Picosynechococcus</taxon>
    </lineage>
</organism>
<accession>Q8KX40</accession>
<keyword id="KW-0472">Membrane</keyword>
<keyword id="KW-0520">NAD</keyword>
<keyword id="KW-0521">NADP</keyword>
<keyword id="KW-0618">Plastoquinone</keyword>
<keyword id="KW-0874">Quinone</keyword>
<keyword id="KW-1185">Reference proteome</keyword>
<keyword id="KW-0793">Thylakoid</keyword>
<keyword id="KW-1278">Translocase</keyword>
<keyword id="KW-0812">Transmembrane</keyword>
<keyword id="KW-1133">Transmembrane helix</keyword>
<keyword id="KW-0813">Transport</keyword>
<protein>
    <recommendedName>
        <fullName evidence="1">NAD(P)H-quinone oxidoreductase subunit 3</fullName>
        <ecNumber evidence="1">7.1.1.-</ecNumber>
    </recommendedName>
    <alternativeName>
        <fullName evidence="1">NAD(P)H dehydrogenase subunit 3</fullName>
    </alternativeName>
    <alternativeName>
        <fullName evidence="1">NADH-plastoquinone oxidoreductase subunit 3</fullName>
    </alternativeName>
    <alternativeName>
        <fullName evidence="1">NDH-1 subunit 3</fullName>
        <shortName evidence="1">NDH-C</shortName>
    </alternativeName>
</protein>
<proteinExistence type="inferred from homology"/>
<dbReference type="EC" id="7.1.1.-" evidence="1"/>
<dbReference type="EMBL" id="AF381040">
    <property type="protein sequence ID" value="AAN03553.1"/>
    <property type="molecule type" value="Genomic_DNA"/>
</dbReference>
<dbReference type="EMBL" id="CP000951">
    <property type="protein sequence ID" value="ACB00722.1"/>
    <property type="molecule type" value="Genomic_DNA"/>
</dbReference>
<dbReference type="RefSeq" id="WP_012308340.1">
    <property type="nucleotide sequence ID" value="NZ_JAHHPU010000003.1"/>
</dbReference>
<dbReference type="SMR" id="Q8KX40"/>
<dbReference type="STRING" id="32049.SYNPCC7002_A2748"/>
<dbReference type="KEGG" id="syp:SYNPCC7002_A2748"/>
<dbReference type="eggNOG" id="COG0838">
    <property type="taxonomic scope" value="Bacteria"/>
</dbReference>
<dbReference type="HOGENOM" id="CLU_119549_1_1_3"/>
<dbReference type="Proteomes" id="UP000001688">
    <property type="component" value="Chromosome"/>
</dbReference>
<dbReference type="GO" id="GO:0030964">
    <property type="term" value="C:NADH dehydrogenase complex"/>
    <property type="evidence" value="ECO:0007669"/>
    <property type="project" value="TreeGrafter"/>
</dbReference>
<dbReference type="GO" id="GO:0031676">
    <property type="term" value="C:plasma membrane-derived thylakoid membrane"/>
    <property type="evidence" value="ECO:0007669"/>
    <property type="project" value="UniProtKB-SubCell"/>
</dbReference>
<dbReference type="GO" id="GO:0008137">
    <property type="term" value="F:NADH dehydrogenase (ubiquinone) activity"/>
    <property type="evidence" value="ECO:0007669"/>
    <property type="project" value="InterPro"/>
</dbReference>
<dbReference type="GO" id="GO:0048038">
    <property type="term" value="F:quinone binding"/>
    <property type="evidence" value="ECO:0007669"/>
    <property type="project" value="UniProtKB-KW"/>
</dbReference>
<dbReference type="GO" id="GO:0019684">
    <property type="term" value="P:photosynthesis, light reaction"/>
    <property type="evidence" value="ECO:0007669"/>
    <property type="project" value="UniProtKB-UniRule"/>
</dbReference>
<dbReference type="FunFam" id="1.20.58.1610:FF:000001">
    <property type="entry name" value="NAD(P)H-quinone oxidoreductase subunit 3, chloroplastic"/>
    <property type="match status" value="1"/>
</dbReference>
<dbReference type="Gene3D" id="1.20.58.1610">
    <property type="entry name" value="NADH:ubiquinone/plastoquinone oxidoreductase, chain 3"/>
    <property type="match status" value="1"/>
</dbReference>
<dbReference type="HAMAP" id="MF_01394">
    <property type="entry name" value="NDH1_NuoA"/>
    <property type="match status" value="1"/>
</dbReference>
<dbReference type="InterPro" id="IPR023043">
    <property type="entry name" value="NAD(P)H_OxRDtase_bac/plastid"/>
</dbReference>
<dbReference type="InterPro" id="IPR000440">
    <property type="entry name" value="NADH_UbQ/plastoQ_OxRdtase_su3"/>
</dbReference>
<dbReference type="InterPro" id="IPR038430">
    <property type="entry name" value="NDAH_ubi_oxred_su3_sf"/>
</dbReference>
<dbReference type="PANTHER" id="PTHR11058">
    <property type="entry name" value="NADH-UBIQUINONE OXIDOREDUCTASE CHAIN 3"/>
    <property type="match status" value="1"/>
</dbReference>
<dbReference type="PANTHER" id="PTHR11058:SF9">
    <property type="entry name" value="NADH-UBIQUINONE OXIDOREDUCTASE CHAIN 3"/>
    <property type="match status" value="1"/>
</dbReference>
<dbReference type="Pfam" id="PF00507">
    <property type="entry name" value="Oxidored_q4"/>
    <property type="match status" value="1"/>
</dbReference>